<evidence type="ECO:0000250" key="1">
    <source>
        <dbReference type="UniProtKB" id="Q38860"/>
    </source>
</evidence>
<evidence type="ECO:0000255" key="2"/>
<evidence type="ECO:0000269" key="3">
    <source>
    </source>
</evidence>
<evidence type="ECO:0000269" key="4">
    <source>
    </source>
</evidence>
<evidence type="ECO:0000303" key="5">
    <source>
    </source>
</evidence>
<evidence type="ECO:0000305" key="6"/>
<evidence type="ECO:0000312" key="7">
    <source>
        <dbReference type="Araport" id="AT4G34250"/>
    </source>
</evidence>
<evidence type="ECO:0000312" key="8">
    <source>
        <dbReference type="EMBL" id="CAB36702.1"/>
    </source>
</evidence>
<comment type="catalytic activity">
    <reaction evidence="6">
        <text>a very-long-chain acyl-CoA + malonyl-CoA + H(+) = a very-long-chain 3-oxoacyl-CoA + CO2 + CoA</text>
        <dbReference type="Rhea" id="RHEA:32727"/>
        <dbReference type="ChEBI" id="CHEBI:15378"/>
        <dbReference type="ChEBI" id="CHEBI:16526"/>
        <dbReference type="ChEBI" id="CHEBI:57287"/>
        <dbReference type="ChEBI" id="CHEBI:57384"/>
        <dbReference type="ChEBI" id="CHEBI:90725"/>
        <dbReference type="ChEBI" id="CHEBI:90736"/>
        <dbReference type="EC" id="2.3.1.199"/>
    </reaction>
</comment>
<comment type="pathway">
    <text>Lipid metabolism; fatty acid biosynthesis.</text>
</comment>
<comment type="subcellular location">
    <subcellularLocation>
        <location evidence="2">Membrane</location>
        <topology evidence="2">Single-pass membrane protein</topology>
    </subcellularLocation>
</comment>
<comment type="tissue specificity">
    <text evidence="4">Expressed in siliques.</text>
</comment>
<comment type="induction">
    <text evidence="3 4">Repressed by herbicides such as flufenacet and benfuresate (PubMed:12916765). Up-regulated by osmotic stress and down-regulated by low temperature, salt and darkness (PubMed:18465198).</text>
</comment>
<comment type="similarity">
    <text evidence="6">Belongs to the thiolase-like superfamily. Chalcone/stilbene synthases family.</text>
</comment>
<dbReference type="EC" id="2.3.1.199" evidence="6"/>
<dbReference type="EMBL" id="AL035521">
    <property type="protein sequence ID" value="CAB36702.1"/>
    <property type="molecule type" value="Genomic_DNA"/>
</dbReference>
<dbReference type="EMBL" id="AL161585">
    <property type="protein sequence ID" value="CAB80142.1"/>
    <property type="molecule type" value="Genomic_DNA"/>
</dbReference>
<dbReference type="EMBL" id="CP002687">
    <property type="protein sequence ID" value="AEE86348.1"/>
    <property type="molecule type" value="Genomic_DNA"/>
</dbReference>
<dbReference type="EMBL" id="AK229262">
    <property type="protein sequence ID" value="BAF01126.1"/>
    <property type="molecule type" value="mRNA"/>
</dbReference>
<dbReference type="PIR" id="T04771">
    <property type="entry name" value="T04771"/>
</dbReference>
<dbReference type="RefSeq" id="NP_195151.1">
    <property type="nucleotide sequence ID" value="NM_119589.6"/>
</dbReference>
<dbReference type="SMR" id="Q9SYZ0"/>
<dbReference type="BioGRID" id="14856">
    <property type="interactions" value="1"/>
</dbReference>
<dbReference type="FunCoup" id="Q9SYZ0">
    <property type="interactions" value="202"/>
</dbReference>
<dbReference type="STRING" id="3702.Q9SYZ0"/>
<dbReference type="GlyGen" id="Q9SYZ0">
    <property type="glycosylation" value="1 site"/>
</dbReference>
<dbReference type="iPTMnet" id="Q9SYZ0"/>
<dbReference type="PaxDb" id="3702-AT4G34250.1"/>
<dbReference type="ProteomicsDB" id="247268"/>
<dbReference type="EnsemblPlants" id="AT4G34250.1">
    <property type="protein sequence ID" value="AT4G34250.1"/>
    <property type="gene ID" value="AT4G34250"/>
</dbReference>
<dbReference type="GeneID" id="829574"/>
<dbReference type="Gramene" id="AT4G34250.1">
    <property type="protein sequence ID" value="AT4G34250.1"/>
    <property type="gene ID" value="AT4G34250"/>
</dbReference>
<dbReference type="KEGG" id="ath:AT4G34250"/>
<dbReference type="Araport" id="AT4G34250"/>
<dbReference type="TAIR" id="AT4G34250">
    <property type="gene designation" value="KCS16"/>
</dbReference>
<dbReference type="eggNOG" id="ENOG502QPKZ">
    <property type="taxonomic scope" value="Eukaryota"/>
</dbReference>
<dbReference type="HOGENOM" id="CLU_013238_2_1_1"/>
<dbReference type="InParanoid" id="Q9SYZ0"/>
<dbReference type="OMA" id="YLMAHRF"/>
<dbReference type="PhylomeDB" id="Q9SYZ0"/>
<dbReference type="BioCyc" id="ARA:AT4G34250-MONOMER"/>
<dbReference type="UniPathway" id="UPA00094"/>
<dbReference type="PRO" id="PR:Q9SYZ0"/>
<dbReference type="Proteomes" id="UP000006548">
    <property type="component" value="Chromosome 4"/>
</dbReference>
<dbReference type="ExpressionAtlas" id="Q9SYZ0">
    <property type="expression patterns" value="baseline and differential"/>
</dbReference>
<dbReference type="GO" id="GO:0016020">
    <property type="term" value="C:membrane"/>
    <property type="evidence" value="ECO:0007669"/>
    <property type="project" value="UniProtKB-SubCell"/>
</dbReference>
<dbReference type="GO" id="GO:0009922">
    <property type="term" value="F:fatty acid elongase activity"/>
    <property type="evidence" value="ECO:0007669"/>
    <property type="project" value="UniProtKB-EC"/>
</dbReference>
<dbReference type="GO" id="GO:0006633">
    <property type="term" value="P:fatty acid biosynthetic process"/>
    <property type="evidence" value="ECO:0007669"/>
    <property type="project" value="UniProtKB-UniPathway"/>
</dbReference>
<dbReference type="GO" id="GO:0009416">
    <property type="term" value="P:response to light stimulus"/>
    <property type="evidence" value="ECO:0000270"/>
    <property type="project" value="TAIR"/>
</dbReference>
<dbReference type="CDD" id="cd00831">
    <property type="entry name" value="CHS_like"/>
    <property type="match status" value="1"/>
</dbReference>
<dbReference type="FunFam" id="3.40.47.10:FF:000028">
    <property type="entry name" value="3-ketoacyl-CoA synthase"/>
    <property type="match status" value="1"/>
</dbReference>
<dbReference type="Gene3D" id="3.40.47.10">
    <property type="match status" value="1"/>
</dbReference>
<dbReference type="InterPro" id="IPR012392">
    <property type="entry name" value="3-ktacl-CoA_syn"/>
</dbReference>
<dbReference type="InterPro" id="IPR013747">
    <property type="entry name" value="ACP_syn_III_C"/>
</dbReference>
<dbReference type="InterPro" id="IPR013601">
    <property type="entry name" value="FAE1_typ3_polyketide_synth"/>
</dbReference>
<dbReference type="InterPro" id="IPR016039">
    <property type="entry name" value="Thiolase-like"/>
</dbReference>
<dbReference type="PANTHER" id="PTHR31561">
    <property type="entry name" value="3-KETOACYL-COA SYNTHASE"/>
    <property type="match status" value="1"/>
</dbReference>
<dbReference type="Pfam" id="PF08541">
    <property type="entry name" value="ACP_syn_III_C"/>
    <property type="match status" value="1"/>
</dbReference>
<dbReference type="Pfam" id="PF08392">
    <property type="entry name" value="FAE1_CUT1_RppA"/>
    <property type="match status" value="1"/>
</dbReference>
<dbReference type="PIRSF" id="PIRSF036417">
    <property type="entry name" value="3-ktacl-CoA_syn"/>
    <property type="match status" value="1"/>
</dbReference>
<dbReference type="SUPFAM" id="SSF53901">
    <property type="entry name" value="Thiolase-like"/>
    <property type="match status" value="2"/>
</dbReference>
<sequence length="493" mass="55778">MDYPMKKVKIFFNYLMAHRFKLCFLPLMVAIAVEASRLSTQDLQNFYLYLQNNHTSLTMFFLYLALGSTLYLMTRPKPVYLVDFSCYLPPSHLKASTQRIMQHVRLVREAGAWKQESDYLMDFCEKILERSGLGQETYVPEGLQTLPLQQNLAVSRIETEEVIIGAVDNLFRNTGISPSDIGILVVNSSTFNPTPSLSSILVNKFKLRDNIKSLNLGGMGCSAGVIAIDAAKSLLQVHRNTYALVVSTENITQNLYMGNNKSMLVTNCLFRIGGAAILLSNRSIDRKRAKYELVHTVRVHTGADDRSYECATQEEDEDGIVGVSLSKNLPMVAARTLKINIATLGPLVLPISEKFHFFVRFVKKKFLNPKLKHYIPDFKLAFEHFCIHAGGRALIDEMEKNLHLTPLDVEASRMTLHRFGNTSSSSIWYELAYTEAKGRMTKGDRIWQIALGSGFKCNSSVWVALRNVKPSTNNPWEQCLHKYPVEIDIDLKE</sequence>
<organism>
    <name type="scientific">Arabidopsis thaliana</name>
    <name type="common">Mouse-ear cress</name>
    <dbReference type="NCBI Taxonomy" id="3702"/>
    <lineage>
        <taxon>Eukaryota</taxon>
        <taxon>Viridiplantae</taxon>
        <taxon>Streptophyta</taxon>
        <taxon>Embryophyta</taxon>
        <taxon>Tracheophyta</taxon>
        <taxon>Spermatophyta</taxon>
        <taxon>Magnoliopsida</taxon>
        <taxon>eudicotyledons</taxon>
        <taxon>Gunneridae</taxon>
        <taxon>Pentapetalae</taxon>
        <taxon>rosids</taxon>
        <taxon>malvids</taxon>
        <taxon>Brassicales</taxon>
        <taxon>Brassicaceae</taxon>
        <taxon>Camelineae</taxon>
        <taxon>Arabidopsis</taxon>
    </lineage>
</organism>
<accession>Q9SYZ0</accession>
<name>KCS16_ARATH</name>
<keyword id="KW-0012">Acyltransferase</keyword>
<keyword id="KW-0472">Membrane</keyword>
<keyword id="KW-1185">Reference proteome</keyword>
<keyword id="KW-0732">Signal</keyword>
<keyword id="KW-0808">Transferase</keyword>
<keyword id="KW-0812">Transmembrane</keyword>
<keyword id="KW-1133">Transmembrane helix</keyword>
<proteinExistence type="evidence at transcript level"/>
<reference key="1">
    <citation type="journal article" date="1999" name="Nature">
        <title>Sequence and analysis of chromosome 4 of the plant Arabidopsis thaliana.</title>
        <authorList>
            <person name="Mayer K.F.X."/>
            <person name="Schueller C."/>
            <person name="Wambutt R."/>
            <person name="Murphy G."/>
            <person name="Volckaert G."/>
            <person name="Pohl T."/>
            <person name="Duesterhoeft A."/>
            <person name="Stiekema W."/>
            <person name="Entian K.-D."/>
            <person name="Terryn N."/>
            <person name="Harris B."/>
            <person name="Ansorge W."/>
            <person name="Brandt P."/>
            <person name="Grivell L.A."/>
            <person name="Rieger M."/>
            <person name="Weichselgartner M."/>
            <person name="de Simone V."/>
            <person name="Obermaier B."/>
            <person name="Mache R."/>
            <person name="Mueller M."/>
            <person name="Kreis M."/>
            <person name="Delseny M."/>
            <person name="Puigdomenech P."/>
            <person name="Watson M."/>
            <person name="Schmidtheini T."/>
            <person name="Reichert B."/>
            <person name="Portetelle D."/>
            <person name="Perez-Alonso M."/>
            <person name="Boutry M."/>
            <person name="Bancroft I."/>
            <person name="Vos P."/>
            <person name="Hoheisel J."/>
            <person name="Zimmermann W."/>
            <person name="Wedler H."/>
            <person name="Ridley P."/>
            <person name="Langham S.-A."/>
            <person name="McCullagh B."/>
            <person name="Bilham L."/>
            <person name="Robben J."/>
            <person name="van der Schueren J."/>
            <person name="Grymonprez B."/>
            <person name="Chuang Y.-J."/>
            <person name="Vandenbussche F."/>
            <person name="Braeken M."/>
            <person name="Weltjens I."/>
            <person name="Voet M."/>
            <person name="Bastiaens I."/>
            <person name="Aert R."/>
            <person name="Defoor E."/>
            <person name="Weitzenegger T."/>
            <person name="Bothe G."/>
            <person name="Ramsperger U."/>
            <person name="Hilbert H."/>
            <person name="Braun M."/>
            <person name="Holzer E."/>
            <person name="Brandt A."/>
            <person name="Peters S."/>
            <person name="van Staveren M."/>
            <person name="Dirkse W."/>
            <person name="Mooijman P."/>
            <person name="Klein Lankhorst R."/>
            <person name="Rose M."/>
            <person name="Hauf J."/>
            <person name="Koetter P."/>
            <person name="Berneiser S."/>
            <person name="Hempel S."/>
            <person name="Feldpausch M."/>
            <person name="Lamberth S."/>
            <person name="Van den Daele H."/>
            <person name="De Keyser A."/>
            <person name="Buysshaert C."/>
            <person name="Gielen J."/>
            <person name="Villarroel R."/>
            <person name="De Clercq R."/>
            <person name="van Montagu M."/>
            <person name="Rogers J."/>
            <person name="Cronin A."/>
            <person name="Quail M.A."/>
            <person name="Bray-Allen S."/>
            <person name="Clark L."/>
            <person name="Doggett J."/>
            <person name="Hall S."/>
            <person name="Kay M."/>
            <person name="Lennard N."/>
            <person name="McLay K."/>
            <person name="Mayes R."/>
            <person name="Pettett A."/>
            <person name="Rajandream M.A."/>
            <person name="Lyne M."/>
            <person name="Benes V."/>
            <person name="Rechmann S."/>
            <person name="Borkova D."/>
            <person name="Bloecker H."/>
            <person name="Scharfe M."/>
            <person name="Grimm M."/>
            <person name="Loehnert T.-H."/>
            <person name="Dose S."/>
            <person name="de Haan M."/>
            <person name="Maarse A.C."/>
            <person name="Schaefer M."/>
            <person name="Mueller-Auer S."/>
            <person name="Gabel C."/>
            <person name="Fuchs M."/>
            <person name="Fartmann B."/>
            <person name="Granderath K."/>
            <person name="Dauner D."/>
            <person name="Herzl A."/>
            <person name="Neumann S."/>
            <person name="Argiriou A."/>
            <person name="Vitale D."/>
            <person name="Liguori R."/>
            <person name="Piravandi E."/>
            <person name="Massenet O."/>
            <person name="Quigley F."/>
            <person name="Clabauld G."/>
            <person name="Muendlein A."/>
            <person name="Felber R."/>
            <person name="Schnabl S."/>
            <person name="Hiller R."/>
            <person name="Schmidt W."/>
            <person name="Lecharny A."/>
            <person name="Aubourg S."/>
            <person name="Chefdor F."/>
            <person name="Cooke R."/>
            <person name="Berger C."/>
            <person name="Monfort A."/>
            <person name="Casacuberta E."/>
            <person name="Gibbons T."/>
            <person name="Weber N."/>
            <person name="Vandenbol M."/>
            <person name="Bargues M."/>
            <person name="Terol J."/>
            <person name="Torres A."/>
            <person name="Perez-Perez A."/>
            <person name="Purnelle B."/>
            <person name="Bent E."/>
            <person name="Johnson S."/>
            <person name="Tacon D."/>
            <person name="Jesse T."/>
            <person name="Heijnen L."/>
            <person name="Schwarz S."/>
            <person name="Scholler P."/>
            <person name="Heber S."/>
            <person name="Francs P."/>
            <person name="Bielke C."/>
            <person name="Frishman D."/>
            <person name="Haase D."/>
            <person name="Lemcke K."/>
            <person name="Mewes H.-W."/>
            <person name="Stocker S."/>
            <person name="Zaccaria P."/>
            <person name="Bevan M."/>
            <person name="Wilson R.K."/>
            <person name="de la Bastide M."/>
            <person name="Habermann K."/>
            <person name="Parnell L."/>
            <person name="Dedhia N."/>
            <person name="Gnoj L."/>
            <person name="Schutz K."/>
            <person name="Huang E."/>
            <person name="Spiegel L."/>
            <person name="Sekhon M."/>
            <person name="Murray J."/>
            <person name="Sheet P."/>
            <person name="Cordes M."/>
            <person name="Abu-Threideh J."/>
            <person name="Stoneking T."/>
            <person name="Kalicki J."/>
            <person name="Graves T."/>
            <person name="Harmon G."/>
            <person name="Edwards J."/>
            <person name="Latreille P."/>
            <person name="Courtney L."/>
            <person name="Cloud J."/>
            <person name="Abbott A."/>
            <person name="Scott K."/>
            <person name="Johnson D."/>
            <person name="Minx P."/>
            <person name="Bentley D."/>
            <person name="Fulton B."/>
            <person name="Miller N."/>
            <person name="Greco T."/>
            <person name="Kemp K."/>
            <person name="Kramer J."/>
            <person name="Fulton L."/>
            <person name="Mardis E."/>
            <person name="Dante M."/>
            <person name="Pepin K."/>
            <person name="Hillier L.W."/>
            <person name="Nelson J."/>
            <person name="Spieth J."/>
            <person name="Ryan E."/>
            <person name="Andrews S."/>
            <person name="Geisel C."/>
            <person name="Layman D."/>
            <person name="Du H."/>
            <person name="Ali J."/>
            <person name="Berghoff A."/>
            <person name="Jones K."/>
            <person name="Drone K."/>
            <person name="Cotton M."/>
            <person name="Joshu C."/>
            <person name="Antonoiu B."/>
            <person name="Zidanic M."/>
            <person name="Strong C."/>
            <person name="Sun H."/>
            <person name="Lamar B."/>
            <person name="Yordan C."/>
            <person name="Ma P."/>
            <person name="Zhong J."/>
            <person name="Preston R."/>
            <person name="Vil D."/>
            <person name="Shekher M."/>
            <person name="Matero A."/>
            <person name="Shah R."/>
            <person name="Swaby I.K."/>
            <person name="O'Shaughnessy A."/>
            <person name="Rodriguez M."/>
            <person name="Hoffman J."/>
            <person name="Till S."/>
            <person name="Granat S."/>
            <person name="Shohdy N."/>
            <person name="Hasegawa A."/>
            <person name="Hameed A."/>
            <person name="Lodhi M."/>
            <person name="Johnson A."/>
            <person name="Chen E."/>
            <person name="Marra M.A."/>
            <person name="Martienssen R."/>
            <person name="McCombie W.R."/>
        </authorList>
    </citation>
    <scope>NUCLEOTIDE SEQUENCE [LARGE SCALE GENOMIC DNA]</scope>
    <source>
        <strain>cv. Columbia</strain>
    </source>
</reference>
<reference key="2">
    <citation type="journal article" date="2017" name="Plant J.">
        <title>Araport11: a complete reannotation of the Arabidopsis thaliana reference genome.</title>
        <authorList>
            <person name="Cheng C.Y."/>
            <person name="Krishnakumar V."/>
            <person name="Chan A.P."/>
            <person name="Thibaud-Nissen F."/>
            <person name="Schobel S."/>
            <person name="Town C.D."/>
        </authorList>
    </citation>
    <scope>GENOME REANNOTATION</scope>
    <source>
        <strain>cv. Columbia</strain>
    </source>
</reference>
<reference key="3">
    <citation type="submission" date="2006-07" db="EMBL/GenBank/DDBJ databases">
        <title>Large-scale analysis of RIKEN Arabidopsis full-length (RAFL) cDNAs.</title>
        <authorList>
            <person name="Totoki Y."/>
            <person name="Seki M."/>
            <person name="Ishida J."/>
            <person name="Nakajima M."/>
            <person name="Enju A."/>
            <person name="Kamiya A."/>
            <person name="Narusaka M."/>
            <person name="Shin-i T."/>
            <person name="Nakagawa M."/>
            <person name="Sakamoto N."/>
            <person name="Oishi K."/>
            <person name="Kohara Y."/>
            <person name="Kobayashi M."/>
            <person name="Toyoda A."/>
            <person name="Sakaki Y."/>
            <person name="Sakurai T."/>
            <person name="Iida K."/>
            <person name="Akiyama K."/>
            <person name="Satou M."/>
            <person name="Toyoda T."/>
            <person name="Konagaya A."/>
            <person name="Carninci P."/>
            <person name="Kawai J."/>
            <person name="Hayashizaki Y."/>
            <person name="Shinozaki K."/>
        </authorList>
    </citation>
    <scope>NUCLEOTIDE SEQUENCE [LARGE SCALE MRNA]</scope>
    <source>
        <strain>cv. Columbia</strain>
    </source>
</reference>
<reference key="4">
    <citation type="journal article" date="2003" name="Pest Manag. Sci.">
        <title>Flufenacet herbicide treatment phenocopies the fiddlehead mutant in Arabidopsis thaliana.</title>
        <authorList>
            <person name="Lechelt-Kunze C."/>
            <person name="Meissner R.C."/>
            <person name="Drewes M."/>
            <person name="Tietjen K."/>
        </authorList>
    </citation>
    <scope>INDUCTION</scope>
    <scope>GENE FAMILY</scope>
</reference>
<reference key="5">
    <citation type="journal article" date="2008" name="Plant Mol. Biol.">
        <title>The VLCFA elongase gene family in Arabidopsis thaliana: phylogenetic analysis, 3D modelling and expression profiling.</title>
        <authorList>
            <person name="Joubes J."/>
            <person name="Raffaele S."/>
            <person name="Bourdenx B."/>
            <person name="Garcia C."/>
            <person name="Laroche-Traineau J."/>
            <person name="Moreau P."/>
            <person name="Domergue F."/>
            <person name="Lessire R."/>
        </authorList>
    </citation>
    <scope>GENE FAMILY</scope>
    <scope>NOMENCLATURE</scope>
    <scope>3D-STRUCTURE MODELING</scope>
    <scope>TISSUE SPECIFICITY</scope>
    <scope>INDUCTION</scope>
</reference>
<feature type="signal peptide" evidence="2">
    <location>
        <begin position="1"/>
        <end position="35"/>
    </location>
</feature>
<feature type="chain" id="PRO_0000249108" description="3-ketoacyl-CoA synthase 16">
    <location>
        <begin position="36"/>
        <end position="493"/>
    </location>
</feature>
<feature type="transmembrane region" description="Helical" evidence="2">
    <location>
        <begin position="52"/>
        <end position="74"/>
    </location>
</feature>
<feature type="domain" description="FAE" evidence="2">
    <location>
        <begin position="71"/>
        <end position="366"/>
    </location>
</feature>
<feature type="active site" evidence="1">
    <location>
        <position position="221"/>
    </location>
</feature>
<feature type="active site" evidence="1">
    <location>
        <position position="300"/>
    </location>
</feature>
<feature type="active site" evidence="1">
    <location>
        <position position="384"/>
    </location>
</feature>
<feature type="active site" evidence="1">
    <location>
        <position position="388"/>
    </location>
</feature>
<feature type="active site" evidence="1">
    <location>
        <position position="417"/>
    </location>
</feature>
<feature type="active site" evidence="1">
    <location>
        <position position="421"/>
    </location>
</feature>
<protein>
    <recommendedName>
        <fullName evidence="5">3-ketoacyl-CoA synthase 16</fullName>
        <shortName evidence="5">KCS-16</shortName>
        <ecNumber evidence="6">2.3.1.199</ecNumber>
    </recommendedName>
    <alternativeName>
        <fullName evidence="5">Very long-chain fatty acid condensing enzyme 16</fullName>
        <shortName evidence="5">VLCFA condensing enzyme 16</shortName>
    </alternativeName>
</protein>
<gene>
    <name evidence="5" type="primary">KCS16</name>
    <name type="synonym">EL2</name>
    <name evidence="7" type="ordered locus">At4g34250</name>
    <name evidence="8" type="ORF">F10M10.20</name>
</gene>